<comment type="function">
    <text evidence="1">Catalyzes the conversion of L-lactate to pyruvate. Is coupled to the respiratory chain.</text>
</comment>
<comment type="catalytic activity">
    <reaction evidence="1">
        <text>(S)-lactate + A = pyruvate + AH2</text>
        <dbReference type="Rhea" id="RHEA:45816"/>
        <dbReference type="ChEBI" id="CHEBI:13193"/>
        <dbReference type="ChEBI" id="CHEBI:15361"/>
        <dbReference type="ChEBI" id="CHEBI:16651"/>
        <dbReference type="ChEBI" id="CHEBI:17499"/>
    </reaction>
</comment>
<comment type="cofactor">
    <cofactor evidence="1">
        <name>FMN</name>
        <dbReference type="ChEBI" id="CHEBI:58210"/>
    </cofactor>
</comment>
<comment type="subcellular location">
    <subcellularLocation>
        <location evidence="1">Cell inner membrane</location>
        <topology evidence="1">Peripheral membrane protein</topology>
    </subcellularLocation>
</comment>
<comment type="similarity">
    <text evidence="1">Belongs to the FMN-dependent alpha-hydroxy acid dehydrogenase family.</text>
</comment>
<keyword id="KW-0997">Cell inner membrane</keyword>
<keyword id="KW-1003">Cell membrane</keyword>
<keyword id="KW-0285">Flavoprotein</keyword>
<keyword id="KW-0288">FMN</keyword>
<keyword id="KW-0472">Membrane</keyword>
<keyword id="KW-0560">Oxidoreductase</keyword>
<evidence type="ECO:0000255" key="1">
    <source>
        <dbReference type="HAMAP-Rule" id="MF_01559"/>
    </source>
</evidence>
<protein>
    <recommendedName>
        <fullName evidence="1">L-lactate dehydrogenase</fullName>
        <ecNumber evidence="1">1.1.-.-</ecNumber>
    </recommendedName>
</protein>
<sequence length="379" mass="41400">MIISASTDYRAAAKAKLPPFLFHYIDGGSYDERTLKRNTDDLGDVALRQRVLRDMTDLSLETEIFGEKLAMPIALAPVGLTGMYARRGEVQAAKAAEKKGIPFTMSTVSVCPIEEVAPAIERPMWFQLYVLKDRGFMKNVLERAKAAGVTTLVFTVDMPVPGARYRDMHSGMSGPNAAMRRVFQAMRHPSWALDVGLLGKPHDLGNISTYRGEPTKLEDYIGWLGANFDPSISWKDLEWIRDFWDGPMVIKGILDEEDAKDAVRFGADGIVVSNHGGRQLDGVLSTAKALPSIADAVKGDLKIFVDSGIRTGLDVVRMLALGADCTLLGRSFVYALAAQGGAGVENLLDLYDKEMRVAMTLTGAKTIADLSRDSLVKIP</sequence>
<organism>
    <name type="scientific">Vibrio parahaemolyticus serotype O3:K6 (strain RIMD 2210633)</name>
    <dbReference type="NCBI Taxonomy" id="223926"/>
    <lineage>
        <taxon>Bacteria</taxon>
        <taxon>Pseudomonadati</taxon>
        <taxon>Pseudomonadota</taxon>
        <taxon>Gammaproteobacteria</taxon>
        <taxon>Vibrionales</taxon>
        <taxon>Vibrionaceae</taxon>
        <taxon>Vibrio</taxon>
    </lineage>
</organism>
<dbReference type="EC" id="1.1.-.-" evidence="1"/>
<dbReference type="EMBL" id="BA000032">
    <property type="protein sequence ID" value="BAC62842.1"/>
    <property type="molecule type" value="Genomic_DNA"/>
</dbReference>
<dbReference type="RefSeq" id="NP_801009.1">
    <property type="nucleotide sequence ID" value="NC_004605.1"/>
</dbReference>
<dbReference type="RefSeq" id="WP_005478054.1">
    <property type="nucleotide sequence ID" value="NC_004605.1"/>
</dbReference>
<dbReference type="SMR" id="Q87G18"/>
<dbReference type="GeneID" id="1192195"/>
<dbReference type="KEGG" id="vpa:VPA1499"/>
<dbReference type="PATRIC" id="fig|223926.6.peg.4424"/>
<dbReference type="eggNOG" id="COG1304">
    <property type="taxonomic scope" value="Bacteria"/>
</dbReference>
<dbReference type="HOGENOM" id="CLU_020639_0_0_6"/>
<dbReference type="Proteomes" id="UP000002493">
    <property type="component" value="Chromosome 2"/>
</dbReference>
<dbReference type="GO" id="GO:0005886">
    <property type="term" value="C:plasma membrane"/>
    <property type="evidence" value="ECO:0007669"/>
    <property type="project" value="UniProtKB-SubCell"/>
</dbReference>
<dbReference type="GO" id="GO:0010181">
    <property type="term" value="F:FMN binding"/>
    <property type="evidence" value="ECO:0007669"/>
    <property type="project" value="InterPro"/>
</dbReference>
<dbReference type="GO" id="GO:0004459">
    <property type="term" value="F:L-lactate dehydrogenase activity"/>
    <property type="evidence" value="ECO:0007669"/>
    <property type="project" value="UniProtKB-UniRule"/>
</dbReference>
<dbReference type="GO" id="GO:0009060">
    <property type="term" value="P:aerobic respiration"/>
    <property type="evidence" value="ECO:0007669"/>
    <property type="project" value="TreeGrafter"/>
</dbReference>
<dbReference type="GO" id="GO:0006089">
    <property type="term" value="P:lactate metabolic process"/>
    <property type="evidence" value="ECO:0007669"/>
    <property type="project" value="UniProtKB-UniRule"/>
</dbReference>
<dbReference type="CDD" id="cd02809">
    <property type="entry name" value="alpha_hydroxyacid_oxid_FMN"/>
    <property type="match status" value="1"/>
</dbReference>
<dbReference type="FunFam" id="3.20.20.70:FF:000029">
    <property type="entry name" value="L-lactate dehydrogenase"/>
    <property type="match status" value="1"/>
</dbReference>
<dbReference type="Gene3D" id="3.20.20.70">
    <property type="entry name" value="Aldolase class I"/>
    <property type="match status" value="1"/>
</dbReference>
<dbReference type="HAMAP" id="MF_01559">
    <property type="entry name" value="L_lact_dehydr"/>
    <property type="match status" value="1"/>
</dbReference>
<dbReference type="InterPro" id="IPR013785">
    <property type="entry name" value="Aldolase_TIM"/>
</dbReference>
<dbReference type="InterPro" id="IPR012133">
    <property type="entry name" value="Alpha-hydoxy_acid_DH_FMN"/>
</dbReference>
<dbReference type="InterPro" id="IPR000262">
    <property type="entry name" value="FMN-dep_DH"/>
</dbReference>
<dbReference type="InterPro" id="IPR037396">
    <property type="entry name" value="FMN_HAD"/>
</dbReference>
<dbReference type="InterPro" id="IPR008259">
    <property type="entry name" value="FMN_hydac_DH_AS"/>
</dbReference>
<dbReference type="InterPro" id="IPR020920">
    <property type="entry name" value="LldD"/>
</dbReference>
<dbReference type="NCBIfam" id="NF033901">
    <property type="entry name" value="L_lactate_LldD"/>
    <property type="match status" value="1"/>
</dbReference>
<dbReference type="NCBIfam" id="NF008398">
    <property type="entry name" value="PRK11197.1"/>
    <property type="match status" value="1"/>
</dbReference>
<dbReference type="PANTHER" id="PTHR10578:SF85">
    <property type="entry name" value="L-LACTATE DEHYDROGENASE"/>
    <property type="match status" value="1"/>
</dbReference>
<dbReference type="PANTHER" id="PTHR10578">
    <property type="entry name" value="S -2-HYDROXY-ACID OXIDASE-RELATED"/>
    <property type="match status" value="1"/>
</dbReference>
<dbReference type="Pfam" id="PF01070">
    <property type="entry name" value="FMN_dh"/>
    <property type="match status" value="1"/>
</dbReference>
<dbReference type="PIRSF" id="PIRSF000138">
    <property type="entry name" value="Al-hdrx_acd_dh"/>
    <property type="match status" value="1"/>
</dbReference>
<dbReference type="SUPFAM" id="SSF51395">
    <property type="entry name" value="FMN-linked oxidoreductases"/>
    <property type="match status" value="1"/>
</dbReference>
<dbReference type="PROSITE" id="PS00557">
    <property type="entry name" value="FMN_HYDROXY_ACID_DH_1"/>
    <property type="match status" value="1"/>
</dbReference>
<dbReference type="PROSITE" id="PS51349">
    <property type="entry name" value="FMN_HYDROXY_ACID_DH_2"/>
    <property type="match status" value="1"/>
</dbReference>
<accession>Q87G18</accession>
<gene>
    <name evidence="1" type="primary">lldD</name>
    <name type="ordered locus">VPA1499</name>
</gene>
<proteinExistence type="inferred from homology"/>
<reference key="1">
    <citation type="journal article" date="2003" name="Lancet">
        <title>Genome sequence of Vibrio parahaemolyticus: a pathogenic mechanism distinct from that of V. cholerae.</title>
        <authorList>
            <person name="Makino K."/>
            <person name="Oshima K."/>
            <person name="Kurokawa K."/>
            <person name="Yokoyama K."/>
            <person name="Uda T."/>
            <person name="Tagomori K."/>
            <person name="Iijima Y."/>
            <person name="Najima M."/>
            <person name="Nakano M."/>
            <person name="Yamashita A."/>
            <person name="Kubota Y."/>
            <person name="Kimura S."/>
            <person name="Yasunaga T."/>
            <person name="Honda T."/>
            <person name="Shinagawa H."/>
            <person name="Hattori M."/>
            <person name="Iida T."/>
        </authorList>
    </citation>
    <scope>NUCLEOTIDE SEQUENCE [LARGE SCALE GENOMIC DNA]</scope>
    <source>
        <strain>RIMD 2210633</strain>
    </source>
</reference>
<feature type="chain" id="PRO_0000206353" description="L-lactate dehydrogenase">
    <location>
        <begin position="1"/>
        <end position="379"/>
    </location>
</feature>
<feature type="domain" description="FMN hydroxy acid dehydrogenase" evidence="1">
    <location>
        <begin position="1"/>
        <end position="379"/>
    </location>
</feature>
<feature type="active site" description="Proton acceptor" evidence="1">
    <location>
        <position position="275"/>
    </location>
</feature>
<feature type="binding site" evidence="1">
    <location>
        <position position="24"/>
    </location>
    <ligand>
        <name>substrate</name>
    </ligand>
</feature>
<feature type="binding site" evidence="1">
    <location>
        <position position="106"/>
    </location>
    <ligand>
        <name>FMN</name>
        <dbReference type="ChEBI" id="CHEBI:58210"/>
    </ligand>
</feature>
<feature type="binding site" evidence="1">
    <location>
        <position position="127"/>
    </location>
    <ligand>
        <name>FMN</name>
        <dbReference type="ChEBI" id="CHEBI:58210"/>
    </ligand>
</feature>
<feature type="binding site" evidence="1">
    <location>
        <position position="129"/>
    </location>
    <ligand>
        <name>substrate</name>
    </ligand>
</feature>
<feature type="binding site" evidence="1">
    <location>
        <position position="155"/>
    </location>
    <ligand>
        <name>FMN</name>
        <dbReference type="ChEBI" id="CHEBI:58210"/>
    </ligand>
</feature>
<feature type="binding site" evidence="1">
    <location>
        <position position="164"/>
    </location>
    <ligand>
        <name>substrate</name>
    </ligand>
</feature>
<feature type="binding site" evidence="1">
    <location>
        <position position="251"/>
    </location>
    <ligand>
        <name>FMN</name>
        <dbReference type="ChEBI" id="CHEBI:58210"/>
    </ligand>
</feature>
<feature type="binding site" evidence="1">
    <location>
        <position position="278"/>
    </location>
    <ligand>
        <name>substrate</name>
    </ligand>
</feature>
<feature type="binding site" evidence="1">
    <location>
        <begin position="306"/>
        <end position="330"/>
    </location>
    <ligand>
        <name>FMN</name>
        <dbReference type="ChEBI" id="CHEBI:58210"/>
    </ligand>
</feature>
<name>LLDD_VIBPA</name>